<name>GCAM_MOUSE</name>
<organism>
    <name type="scientific">Mus musculus</name>
    <name type="common">Mouse</name>
    <dbReference type="NCBI Taxonomy" id="10090"/>
    <lineage>
        <taxon>Eukaryota</taxon>
        <taxon>Metazoa</taxon>
        <taxon>Chordata</taxon>
        <taxon>Craniata</taxon>
        <taxon>Vertebrata</taxon>
        <taxon>Euteleostomi</taxon>
        <taxon>Mammalia</taxon>
        <taxon>Eutheria</taxon>
        <taxon>Euarchontoglires</taxon>
        <taxon>Glires</taxon>
        <taxon>Rodentia</taxon>
        <taxon>Myomorpha</taxon>
        <taxon>Muroidea</taxon>
        <taxon>Muridae</taxon>
        <taxon>Murinae</taxon>
        <taxon>Mus</taxon>
        <taxon>Mus</taxon>
    </lineage>
</organism>
<keyword id="KW-0002">3D-structure</keyword>
<keyword id="KW-0025">Alternative splicing</keyword>
<keyword id="KW-1003">Cell membrane</keyword>
<keyword id="KW-1015">Disulfide bond</keyword>
<keyword id="KW-0325">Glycoprotein</keyword>
<keyword id="KW-0393">Immunoglobulin domain</keyword>
<keyword id="KW-0472">Membrane</keyword>
<keyword id="KW-1185">Reference proteome</keyword>
<keyword id="KW-0677">Repeat</keyword>
<keyword id="KW-0812">Transmembrane</keyword>
<keyword id="KW-1133">Transmembrane helix</keyword>
<evidence type="ECO:0000255" key="1"/>
<evidence type="ECO:0000269" key="2">
    <source>
    </source>
</evidence>
<evidence type="ECO:0000305" key="3"/>
<evidence type="ECO:0000312" key="4">
    <source>
        <dbReference type="MGI" id="MGI:96443"/>
    </source>
</evidence>
<evidence type="ECO:0007829" key="5">
    <source>
        <dbReference type="PDB" id="1NCW"/>
    </source>
</evidence>
<accession>P01865</accession>
<dbReference type="EMBL" id="J00470">
    <property type="protein sequence ID" value="AAB59661.1"/>
    <property type="molecule type" value="Genomic_DNA"/>
</dbReference>
<dbReference type="EMBL" id="J00471">
    <property type="protein sequence ID" value="AAB59661.1"/>
    <property type="status" value="JOINED"/>
    <property type="molecule type" value="Genomic_DNA"/>
</dbReference>
<dbReference type="EMBL" id="M35032">
    <property type="protein sequence ID" value="AAA37919.1"/>
    <property type="molecule type" value="Genomic_DNA"/>
</dbReference>
<dbReference type="PIR" id="A02154">
    <property type="entry name" value="G2MSAM"/>
</dbReference>
<dbReference type="PDB" id="1AXT">
    <property type="method" value="X-ray"/>
    <property type="resolution" value="2.15 A"/>
    <property type="chains" value="H=1-99"/>
</dbReference>
<dbReference type="PDB" id="1DQJ">
    <property type="method" value="X-ray"/>
    <property type="resolution" value="2.00 A"/>
    <property type="chains" value="B=1-96"/>
</dbReference>
<dbReference type="PDB" id="1E4W">
    <property type="method" value="X-ray"/>
    <property type="resolution" value="1.95 A"/>
    <property type="chains" value="H=1-98"/>
</dbReference>
<dbReference type="PDB" id="1EGJ">
    <property type="method" value="X-ray"/>
    <property type="resolution" value="2.80 A"/>
    <property type="chains" value="H=1-96"/>
</dbReference>
<dbReference type="PDB" id="1FLR">
    <property type="method" value="X-ray"/>
    <property type="resolution" value="1.85 A"/>
    <property type="chains" value="H=1-100"/>
</dbReference>
<dbReference type="PDB" id="1FPT">
    <property type="method" value="X-ray"/>
    <property type="resolution" value="3.00 A"/>
    <property type="chains" value="H=1-99"/>
</dbReference>
<dbReference type="PDB" id="1GGB">
    <property type="method" value="X-ray"/>
    <property type="resolution" value="2.80 A"/>
    <property type="chains" value="H=1-99"/>
</dbReference>
<dbReference type="PDB" id="1GGC">
    <property type="method" value="X-ray"/>
    <property type="resolution" value="2.80 A"/>
    <property type="chains" value="H=1-99"/>
</dbReference>
<dbReference type="PDB" id="1KB5">
    <property type="method" value="X-ray"/>
    <property type="resolution" value="2.50 A"/>
    <property type="chains" value="H=1-99"/>
</dbReference>
<dbReference type="PDB" id="1LO0">
    <property type="method" value="X-ray"/>
    <property type="resolution" value="2.00 A"/>
    <property type="chains" value="H/Y=1-101"/>
</dbReference>
<dbReference type="PDB" id="1NBY">
    <property type="method" value="X-ray"/>
    <property type="resolution" value="1.80 A"/>
    <property type="chains" value="B=1-96"/>
</dbReference>
<dbReference type="PDB" id="1NCA">
    <property type="method" value="X-ray"/>
    <property type="resolution" value="2.50 A"/>
    <property type="chains" value="H=1-100"/>
</dbReference>
<dbReference type="PDB" id="1NCB">
    <property type="method" value="X-ray"/>
    <property type="resolution" value="2.50 A"/>
    <property type="chains" value="H=1-100"/>
</dbReference>
<dbReference type="PDB" id="1NCC">
    <property type="method" value="X-ray"/>
    <property type="resolution" value="2.50 A"/>
    <property type="chains" value="H=1-100"/>
</dbReference>
<dbReference type="PDB" id="1NCD">
    <property type="method" value="X-ray"/>
    <property type="resolution" value="2.90 A"/>
    <property type="chains" value="H=1-100"/>
</dbReference>
<dbReference type="PDB" id="1NCW">
    <property type="method" value="X-ray"/>
    <property type="resolution" value="1.30 A"/>
    <property type="chains" value="H=1-102"/>
</dbReference>
<dbReference type="PDB" id="1ND0">
    <property type="method" value="X-ray"/>
    <property type="resolution" value="2.45 A"/>
    <property type="chains" value="B/D/F/H=1-102"/>
</dbReference>
<dbReference type="PDB" id="1NDG">
    <property type="method" value="X-ray"/>
    <property type="resolution" value="1.90 A"/>
    <property type="chains" value="B=1-96"/>
</dbReference>
<dbReference type="PDB" id="1NDM">
    <property type="method" value="X-ray"/>
    <property type="resolution" value="2.10 A"/>
    <property type="chains" value="B=1-96"/>
</dbReference>
<dbReference type="PDB" id="1ORQ">
    <property type="method" value="X-ray"/>
    <property type="resolution" value="3.20 A"/>
    <property type="chains" value="B=1-99"/>
</dbReference>
<dbReference type="PDB" id="1PLG">
    <property type="method" value="X-ray"/>
    <property type="resolution" value="2.80 A"/>
    <property type="chains" value="H=1-97"/>
</dbReference>
<dbReference type="PDB" id="1RU9">
    <property type="method" value="X-ray"/>
    <property type="resolution" value="2.50 A"/>
    <property type="chains" value="H=1-102"/>
</dbReference>
<dbReference type="PDB" id="1RUA">
    <property type="method" value="X-ray"/>
    <property type="resolution" value="1.75 A"/>
    <property type="chains" value="H=1-102"/>
</dbReference>
<dbReference type="PDB" id="1RUK">
    <property type="method" value="X-ray"/>
    <property type="resolution" value="1.40 A"/>
    <property type="chains" value="H=1-102"/>
</dbReference>
<dbReference type="PDB" id="1RUL">
    <property type="method" value="X-ray"/>
    <property type="resolution" value="1.88 A"/>
    <property type="chains" value="H=1-102"/>
</dbReference>
<dbReference type="PDB" id="1RUM">
    <property type="method" value="X-ray"/>
    <property type="resolution" value="1.48 A"/>
    <property type="chains" value="H=1-102"/>
</dbReference>
<dbReference type="PDB" id="1RUP">
    <property type="method" value="X-ray"/>
    <property type="resolution" value="1.40 A"/>
    <property type="chains" value="H=1-102"/>
</dbReference>
<dbReference type="PDB" id="1YEE">
    <property type="method" value="X-ray"/>
    <property type="resolution" value="2.20 A"/>
    <property type="chains" value="H=1-98"/>
</dbReference>
<dbReference type="PDB" id="3FO9">
    <property type="method" value="X-ray"/>
    <property type="resolution" value="1.90 A"/>
    <property type="chains" value="B/H=1-99"/>
</dbReference>
<dbReference type="PDB" id="3J3P">
    <property type="method" value="EM"/>
    <property type="resolution" value="9.10 A"/>
    <property type="chains" value="H=1-99"/>
</dbReference>
<dbReference type="PDB" id="4FAB">
    <property type="method" value="X-ray"/>
    <property type="resolution" value="2.70 A"/>
    <property type="chains" value="H=1-97"/>
</dbReference>
<dbReference type="PDB" id="4ZXB">
    <property type="method" value="X-ray"/>
    <property type="resolution" value="3.30 A"/>
    <property type="chains" value="C=1-106"/>
</dbReference>
<dbReference type="PDB" id="6UQC">
    <property type="method" value="X-ray"/>
    <property type="resolution" value="1.87 A"/>
    <property type="chains" value="C/D/E/F=119-325"/>
</dbReference>
<dbReference type="PDB" id="8AQT">
    <property type="method" value="EM"/>
    <property type="resolution" value="4.40 A"/>
    <property type="chains" value="A=97-328"/>
</dbReference>
<dbReference type="PDB" id="8AQU">
    <property type="method" value="EM"/>
    <property type="resolution" value="3.22 A"/>
    <property type="chains" value="A=97-328"/>
</dbReference>
<dbReference type="PDB" id="8AQV">
    <property type="method" value="EM"/>
    <property type="resolution" value="2.96 A"/>
    <property type="chains" value="A=97-328"/>
</dbReference>
<dbReference type="PDBsum" id="1AXT"/>
<dbReference type="PDBsum" id="1DQJ"/>
<dbReference type="PDBsum" id="1E4W"/>
<dbReference type="PDBsum" id="1EGJ"/>
<dbReference type="PDBsum" id="1FLR"/>
<dbReference type="PDBsum" id="1FPT"/>
<dbReference type="PDBsum" id="1GGB"/>
<dbReference type="PDBsum" id="1GGC"/>
<dbReference type="PDBsum" id="1KB5"/>
<dbReference type="PDBsum" id="1LO0"/>
<dbReference type="PDBsum" id="1NBY"/>
<dbReference type="PDBsum" id="1NCA"/>
<dbReference type="PDBsum" id="1NCB"/>
<dbReference type="PDBsum" id="1NCC"/>
<dbReference type="PDBsum" id="1NCD"/>
<dbReference type="PDBsum" id="1NCW"/>
<dbReference type="PDBsum" id="1ND0"/>
<dbReference type="PDBsum" id="1NDG"/>
<dbReference type="PDBsum" id="1NDM"/>
<dbReference type="PDBsum" id="1ORQ"/>
<dbReference type="PDBsum" id="1PLG"/>
<dbReference type="PDBsum" id="1RU9"/>
<dbReference type="PDBsum" id="1RUA"/>
<dbReference type="PDBsum" id="1RUK"/>
<dbReference type="PDBsum" id="1RUL"/>
<dbReference type="PDBsum" id="1RUM"/>
<dbReference type="PDBsum" id="1RUP"/>
<dbReference type="PDBsum" id="1YEE"/>
<dbReference type="PDBsum" id="3FO9"/>
<dbReference type="PDBsum" id="3J3P"/>
<dbReference type="PDBsum" id="4FAB"/>
<dbReference type="PDBsum" id="4ZXB"/>
<dbReference type="PDBsum" id="6UQC"/>
<dbReference type="PDBsum" id="8AQT"/>
<dbReference type="PDBsum" id="8AQU"/>
<dbReference type="PDBsum" id="8AQV"/>
<dbReference type="EMDB" id="EMD-15589"/>
<dbReference type="EMDB" id="EMD-15590"/>
<dbReference type="EMDB" id="EMD-15591"/>
<dbReference type="EMDB" id="EMD-37774"/>
<dbReference type="EMDB" id="EMD-37775"/>
<dbReference type="EMDB" id="EMD-37867"/>
<dbReference type="PCDDB" id="P01865"/>
<dbReference type="SMR" id="P01865"/>
<dbReference type="FunCoup" id="P01865">
    <property type="interactions" value="81"/>
</dbReference>
<dbReference type="IntAct" id="P01865">
    <property type="interactions" value="2"/>
</dbReference>
<dbReference type="MINT" id="P01865"/>
<dbReference type="GlyCosmos" id="P01865">
    <property type="glycosylation" value="1 site, No reported glycans"/>
</dbReference>
<dbReference type="GlyGen" id="P01865">
    <property type="glycosylation" value="1 site"/>
</dbReference>
<dbReference type="iPTMnet" id="P01865"/>
<dbReference type="jPOST" id="P01865"/>
<dbReference type="ProteomicsDB" id="266787">
    <molecule id="P01865-1"/>
</dbReference>
<dbReference type="AGR" id="MGI:96443"/>
<dbReference type="MGI" id="MGI:96443">
    <property type="gene designation" value="Ighg2a"/>
</dbReference>
<dbReference type="InParanoid" id="P01865"/>
<dbReference type="EvolutionaryTrace" id="P01865"/>
<dbReference type="PRO" id="PR:P01865"/>
<dbReference type="Proteomes" id="UP000000589">
    <property type="component" value="Unplaced"/>
</dbReference>
<dbReference type="RNAct" id="P01865">
    <property type="molecule type" value="protein"/>
</dbReference>
<dbReference type="GO" id="GO:0042571">
    <property type="term" value="C:immunoglobulin complex, circulating"/>
    <property type="evidence" value="ECO:0000314"/>
    <property type="project" value="MGI"/>
</dbReference>
<dbReference type="GO" id="GO:0005771">
    <property type="term" value="C:multivesicular body"/>
    <property type="evidence" value="ECO:0000314"/>
    <property type="project" value="MGI"/>
</dbReference>
<dbReference type="GO" id="GO:0005886">
    <property type="term" value="C:plasma membrane"/>
    <property type="evidence" value="ECO:0007669"/>
    <property type="project" value="UniProtKB-SubCell"/>
</dbReference>
<dbReference type="GO" id="GO:0003823">
    <property type="term" value="F:antigen binding"/>
    <property type="evidence" value="ECO:0000314"/>
    <property type="project" value="MGI"/>
</dbReference>
<dbReference type="GO" id="GO:0001788">
    <property type="term" value="P:antibody-dependent cellular cytotoxicity"/>
    <property type="evidence" value="ECO:0000314"/>
    <property type="project" value="MGI"/>
</dbReference>
<dbReference type="GO" id="GO:0019882">
    <property type="term" value="P:antigen processing and presentation"/>
    <property type="evidence" value="ECO:0000314"/>
    <property type="project" value="MGI"/>
</dbReference>
<dbReference type="GO" id="GO:0006958">
    <property type="term" value="P:complement activation, classical pathway"/>
    <property type="evidence" value="ECO:0000314"/>
    <property type="project" value="MGI"/>
</dbReference>
<dbReference type="GO" id="GO:0045022">
    <property type="term" value="P:early endosome to late endosome transport"/>
    <property type="evidence" value="ECO:0000314"/>
    <property type="project" value="MGI"/>
</dbReference>
<dbReference type="GO" id="GO:0008333">
    <property type="term" value="P:endosome to lysosome transport"/>
    <property type="evidence" value="ECO:0000314"/>
    <property type="project" value="MGI"/>
</dbReference>
<dbReference type="GO" id="GO:0002455">
    <property type="term" value="P:humoral immune response mediated by circulating immunoglobulin"/>
    <property type="evidence" value="ECO:0000314"/>
    <property type="project" value="MGI"/>
</dbReference>
<dbReference type="GO" id="GO:0016064">
    <property type="term" value="P:immunoglobulin mediated immune response"/>
    <property type="evidence" value="ECO:0000314"/>
    <property type="project" value="MGI"/>
</dbReference>
<dbReference type="GO" id="GO:0006911">
    <property type="term" value="P:phagocytosis, engulfment"/>
    <property type="evidence" value="ECO:0000314"/>
    <property type="project" value="MGI"/>
</dbReference>
<dbReference type="GO" id="GO:0006910">
    <property type="term" value="P:phagocytosis, recognition"/>
    <property type="evidence" value="ECO:0000314"/>
    <property type="project" value="MGI"/>
</dbReference>
<dbReference type="GO" id="GO:0050871">
    <property type="term" value="P:positive regulation of B cell activation"/>
    <property type="evidence" value="ECO:0000314"/>
    <property type="project" value="MGI"/>
</dbReference>
<dbReference type="GO" id="GO:0045807">
    <property type="term" value="P:positive regulation of endocytosis"/>
    <property type="evidence" value="ECO:0000314"/>
    <property type="project" value="MGI"/>
</dbReference>
<dbReference type="GO" id="GO:0050778">
    <property type="term" value="P:positive regulation of immune response"/>
    <property type="evidence" value="ECO:0000314"/>
    <property type="project" value="MGI"/>
</dbReference>
<dbReference type="GO" id="GO:0050766">
    <property type="term" value="P:positive regulation of phagocytosis"/>
    <property type="evidence" value="ECO:0000314"/>
    <property type="project" value="MGI"/>
</dbReference>
<dbReference type="GO" id="GO:0001812">
    <property type="term" value="P:positive regulation of type I hypersensitivity"/>
    <property type="evidence" value="ECO:0000314"/>
    <property type="project" value="MGI"/>
</dbReference>
<dbReference type="GO" id="GO:0001798">
    <property type="term" value="P:positive regulation of type IIa hypersensitivity"/>
    <property type="evidence" value="ECO:0000314"/>
    <property type="project" value="MGI"/>
</dbReference>
<dbReference type="GO" id="GO:0030162">
    <property type="term" value="P:regulation of proteolysis"/>
    <property type="evidence" value="ECO:0000314"/>
    <property type="project" value="MGI"/>
</dbReference>
<dbReference type="GO" id="GO:0009617">
    <property type="term" value="P:response to bacterium"/>
    <property type="evidence" value="ECO:0000270"/>
    <property type="project" value="MGI"/>
</dbReference>
<dbReference type="CDD" id="cd21817">
    <property type="entry name" value="IgC1_CH1_IgEG"/>
    <property type="match status" value="1"/>
</dbReference>
<dbReference type="CDD" id="cd05768">
    <property type="entry name" value="IgC1_CH3_IgAGD_CH4_IgAEM"/>
    <property type="match status" value="1"/>
</dbReference>
<dbReference type="FunFam" id="2.60.40.10:FF:001739">
    <property type="entry name" value="Ig gamma-2A chain C region"/>
    <property type="match status" value="1"/>
</dbReference>
<dbReference type="FunFam" id="2.60.40.10:FF:000463">
    <property type="entry name" value="Immunoglobulin heavy constant gamma 1"/>
    <property type="match status" value="1"/>
</dbReference>
<dbReference type="FunFam" id="2.60.40.10:FF:001129">
    <property type="entry name" value="Immunoglobulin heavy constant gamma 1"/>
    <property type="match status" value="1"/>
</dbReference>
<dbReference type="Gene3D" id="2.60.40.10">
    <property type="entry name" value="Immunoglobulins"/>
    <property type="match status" value="3"/>
</dbReference>
<dbReference type="InterPro" id="IPR007110">
    <property type="entry name" value="Ig-like_dom"/>
</dbReference>
<dbReference type="InterPro" id="IPR036179">
    <property type="entry name" value="Ig-like_dom_sf"/>
</dbReference>
<dbReference type="InterPro" id="IPR013783">
    <property type="entry name" value="Ig-like_fold"/>
</dbReference>
<dbReference type="InterPro" id="IPR003006">
    <property type="entry name" value="Ig/MHC_CS"/>
</dbReference>
<dbReference type="InterPro" id="IPR003597">
    <property type="entry name" value="Ig_C1-set"/>
</dbReference>
<dbReference type="InterPro" id="IPR050380">
    <property type="entry name" value="Immune_Resp_Modulators"/>
</dbReference>
<dbReference type="PANTHER" id="PTHR23411">
    <property type="entry name" value="TAPASIN"/>
    <property type="match status" value="1"/>
</dbReference>
<dbReference type="Pfam" id="PF07654">
    <property type="entry name" value="C1-set"/>
    <property type="match status" value="3"/>
</dbReference>
<dbReference type="SMART" id="SM00407">
    <property type="entry name" value="IGc1"/>
    <property type="match status" value="3"/>
</dbReference>
<dbReference type="SUPFAM" id="SSF48726">
    <property type="entry name" value="Immunoglobulin"/>
    <property type="match status" value="3"/>
</dbReference>
<dbReference type="PROSITE" id="PS50835">
    <property type="entry name" value="IG_LIKE"/>
    <property type="match status" value="3"/>
</dbReference>
<dbReference type="PROSITE" id="PS00290">
    <property type="entry name" value="IG_MHC"/>
    <property type="match status" value="1"/>
</dbReference>
<proteinExistence type="evidence at protein level"/>
<feature type="chain" id="PRO_0000153586" description="Immunoglobulin heavy constant gamma 2A">
    <location>
        <begin position="1" status="less than"/>
        <end position="398"/>
    </location>
</feature>
<feature type="transmembrane region" description="Helical" evidence="1">
    <location>
        <begin position="345"/>
        <end position="362"/>
    </location>
</feature>
<feature type="topological domain" description="Cytoplasmic" evidence="1">
    <location>
        <begin position="363"/>
        <end position="398"/>
    </location>
</feature>
<feature type="domain" description="Ig-like 1">
    <location>
        <begin position="5"/>
        <end position="97"/>
    </location>
</feature>
<feature type="domain" description="Ig-like 2">
    <location>
        <begin position="120"/>
        <end position="219"/>
    </location>
</feature>
<feature type="domain" description="Ig-like 3">
    <location>
        <begin position="228"/>
        <end position="324"/>
    </location>
</feature>
<feature type="glycosylation site" description="N-linked (GlcNAc...) asparagine" evidence="2">
    <location>
        <position position="179"/>
    </location>
</feature>
<feature type="disulfide bond" description="Interchain (with a light chain)">
    <location>
        <position position="14"/>
    </location>
</feature>
<feature type="disulfide bond">
    <location>
        <begin position="26"/>
        <end position="81"/>
    </location>
</feature>
<feature type="disulfide bond" description="Interchain (with a heavy chain)">
    <location>
        <position position="106"/>
    </location>
</feature>
<feature type="disulfide bond" description="Interchain (with a heavy chain)">
    <location>
        <position position="109"/>
    </location>
</feature>
<feature type="disulfide bond" description="Interchain (with a heavy chain)">
    <location>
        <position position="111"/>
    </location>
</feature>
<feature type="disulfide bond">
    <location>
        <begin position="143"/>
        <end position="203"/>
    </location>
</feature>
<feature type="disulfide bond">
    <location>
        <begin position="249"/>
        <end position="307"/>
    </location>
</feature>
<feature type="non-terminal residue">
    <location>
        <position position="1"/>
    </location>
</feature>
<feature type="strand" evidence="5">
    <location>
        <begin position="6"/>
        <end position="10"/>
    </location>
</feature>
<feature type="helix" evidence="5">
    <location>
        <begin position="14"/>
        <end position="16"/>
    </location>
</feature>
<feature type="strand" evidence="5">
    <location>
        <begin position="17"/>
        <end position="34"/>
    </location>
</feature>
<feature type="strand" evidence="5">
    <location>
        <begin position="37"/>
        <end position="40"/>
    </location>
</feature>
<feature type="helix" evidence="5">
    <location>
        <begin position="41"/>
        <end position="43"/>
    </location>
</feature>
<feature type="strand" evidence="5">
    <location>
        <begin position="49"/>
        <end position="51"/>
    </location>
</feature>
<feature type="strand" evidence="5">
    <location>
        <begin position="55"/>
        <end position="57"/>
    </location>
</feature>
<feature type="strand" evidence="5">
    <location>
        <begin position="60"/>
        <end position="70"/>
    </location>
</feature>
<feature type="helix" evidence="5">
    <location>
        <begin position="71"/>
        <end position="73"/>
    </location>
</feature>
<feature type="turn" evidence="5">
    <location>
        <begin position="74"/>
        <end position="76"/>
    </location>
</feature>
<feature type="strand" evidence="5">
    <location>
        <begin position="80"/>
        <end position="85"/>
    </location>
</feature>
<feature type="helix" evidence="5">
    <location>
        <begin position="86"/>
        <end position="88"/>
    </location>
</feature>
<feature type="strand" evidence="5">
    <location>
        <begin position="90"/>
        <end position="95"/>
    </location>
</feature>
<comment type="subcellular location">
    <subcellularLocation>
        <location evidence="3">Cell membrane</location>
        <topology evidence="3">Single-pass membrane protein</topology>
    </subcellularLocation>
</comment>
<comment type="alternative products">
    <event type="alternative splicing"/>
    <isoform>
        <id>P01865-1</id>
        <name>Membrane-bound</name>
        <sequence type="displayed"/>
    </isoform>
    <isoform>
        <id>P01864-1</id>
        <name>Secreted</name>
        <sequence type="external"/>
    </isoform>
</comment>
<protein>
    <recommendedName>
        <fullName evidence="4">Immunoglobulin heavy constant gamma 2A</fullName>
    </recommendedName>
    <alternativeName>
        <fullName evidence="3">Ig gamma-2A chain C region, membrane-bound form</fullName>
    </alternativeName>
</protein>
<gene>
    <name evidence="4" type="primary">Ighg2a</name>
    <name evidence="4" type="synonym">Igh-1a</name>
</gene>
<reference key="1">
    <citation type="journal article" date="1981" name="Nucleic Acids Res.">
        <title>The complete nucleotide sequence of mouse immunoglobin gamma 2a gene and evolution of heavy chain genes: further evidence for intervening sequence-mediated domain transfer.</title>
        <authorList>
            <person name="Yamawaki-Kataoka Y."/>
            <person name="Miyata T."/>
            <person name="Honjo T."/>
        </authorList>
    </citation>
    <scope>NUCLEOTIDE SEQUENCE [GENOMIC DNA]</scope>
</reference>
<reference key="2">
    <citation type="journal article" date="1982" name="Proc. Natl. Acad. Sci. U.S.A.">
        <title>Nucleotide sequences of gene segments encoding membrane domains of immunoglobulin gamma chains.</title>
        <authorList>
            <person name="Yamawaki-Kataoka Y."/>
            <person name="Nakai S."/>
            <person name="Miyata T."/>
            <person name="Honjo T."/>
        </authorList>
    </citation>
    <scope>NUCLEOTIDE SEQUENCE [GENOMIC DNA] OF 329-398</scope>
</reference>
<reference key="3">
    <citation type="journal article" date="1989" name="Mol. Immunol.">
        <title>Sequence and polyadenylation site determination of the murine immunoglobulin gamma 2a membrane 3' untranslated region.</title>
        <authorList>
            <person name="Hall B."/>
            <person name="Milcarek C."/>
        </authorList>
    </citation>
    <scope>NUCLEOTIDE SEQUENCE [GENOMIC DNA] OF 372-398</scope>
</reference>
<reference key="4">
    <citation type="journal article" date="2007" name="J. Proteome Res.">
        <title>Enhanced analysis of the mouse plasma proteome using cysteine-containing tryptic glycopeptides.</title>
        <authorList>
            <person name="Bernhard O.K."/>
            <person name="Kapp E.A."/>
            <person name="Simpson R.J."/>
        </authorList>
    </citation>
    <scope>GLYCOSYLATION [LARGE SCALE ANALYSIS] AT ASN-179</scope>
    <source>
        <strain>C57BL/6J</strain>
        <tissue>Plasma</tissue>
    </source>
</reference>
<sequence length="398" mass="43949">KTTAPSVYPLAPVCGDTTGSSVTLGCLVKGYFPEPVTLTWNSGSLSSGVHTFPAVLQSDLYTLSSSVTVTSSTWPSQSITCNVAHPASSTKVDKKIEPRGPTIKPCPPCKCPAPNLLGGPSVFIFPPKIKDVLMISLSPIVTCVVVDVSEDDPDVQISWFVNNVEVHTAQTQTHREDYNSTLRVVSALPIQHQDWMSGKEFKCKVNNKDLPAPIERTISKPKGSVRAPQVYVLPPPEEEMTKKQVTLTCMVTDFMPEDIYVEWTNNGKTELNYKNTEPVLDSDGSYFMYSKLRVEKKNWVERNSYSCSVVHEGLHNHHTTKSFSRTPGLDLDDVCAEAQDGELDGLWTTITIFISLFLLSVCYSASVTLFKVKWIFSSVVELKQTISPDYRNMIGQGA</sequence>